<keyword id="KW-1185">Reference proteome</keyword>
<keyword id="KW-0687">Ribonucleoprotein</keyword>
<keyword id="KW-0689">Ribosomal protein</keyword>
<keyword id="KW-0694">RNA-binding</keyword>
<keyword id="KW-0699">rRNA-binding</keyword>
<protein>
    <recommendedName>
        <fullName evidence="1">Small ribosomal subunit protein uS5</fullName>
    </recommendedName>
    <alternativeName>
        <fullName evidence="2">30S ribosomal protein S5</fullName>
    </alternativeName>
</protein>
<accession>Q88XW9</accession>
<accession>F9UMM2</accession>
<name>RS5_LACPL</name>
<organism>
    <name type="scientific">Lactiplantibacillus plantarum (strain ATCC BAA-793 / NCIMB 8826 / WCFS1)</name>
    <name type="common">Lactobacillus plantarum</name>
    <dbReference type="NCBI Taxonomy" id="220668"/>
    <lineage>
        <taxon>Bacteria</taxon>
        <taxon>Bacillati</taxon>
        <taxon>Bacillota</taxon>
        <taxon>Bacilli</taxon>
        <taxon>Lactobacillales</taxon>
        <taxon>Lactobacillaceae</taxon>
        <taxon>Lactiplantibacillus</taxon>
    </lineage>
</organism>
<sequence length="166" mass="17261">MTFIDPSKLDLDDNVVAINRITKVVKGGRRLRFAALVIVGDHKGHVGFGTGKAQEVPEAIRKASEAAKKNLITVPMVGTTIPHEALGVYGGGRIMLKPAVEGSGVAAGGAVRAVMELAGVDDVTSKRLGSNTPVNVVRATFEGLKSLKTAEQVAALRGVSAEHLAE</sequence>
<comment type="function">
    <text evidence="1">With S4 and S12 plays an important role in translational accuracy.</text>
</comment>
<comment type="function">
    <text evidence="1">Located at the back of the 30S subunit body where it stabilizes the conformation of the head with respect to the body.</text>
</comment>
<comment type="subunit">
    <text evidence="1">Part of the 30S ribosomal subunit. Contacts proteins S4 and S8.</text>
</comment>
<comment type="domain">
    <text>The N-terminal domain interacts with the head of the 30S subunit; the C-terminal domain interacts with the body and contacts protein S4. The interaction surface between S4 and S5 is involved in control of translational fidelity.</text>
</comment>
<comment type="similarity">
    <text evidence="1">Belongs to the universal ribosomal protein uS5 family.</text>
</comment>
<evidence type="ECO:0000255" key="1">
    <source>
        <dbReference type="HAMAP-Rule" id="MF_01307"/>
    </source>
</evidence>
<evidence type="ECO:0000305" key="2"/>
<gene>
    <name evidence="1" type="primary">rpsE</name>
    <name type="ordered locus">lp_1053</name>
</gene>
<feature type="chain" id="PRO_0000131531" description="Small ribosomal subunit protein uS5">
    <location>
        <begin position="1"/>
        <end position="166"/>
    </location>
</feature>
<feature type="domain" description="S5 DRBM" evidence="1">
    <location>
        <begin position="11"/>
        <end position="74"/>
    </location>
</feature>
<proteinExistence type="inferred from homology"/>
<dbReference type="EMBL" id="AL935263">
    <property type="protein sequence ID" value="CCC78461.1"/>
    <property type="molecule type" value="Genomic_DNA"/>
</dbReference>
<dbReference type="RefSeq" id="WP_003638077.1">
    <property type="nucleotide sequence ID" value="NC_004567.2"/>
</dbReference>
<dbReference type="RefSeq" id="YP_004888975.1">
    <property type="nucleotide sequence ID" value="NC_004567.2"/>
</dbReference>
<dbReference type="SMR" id="Q88XW9"/>
<dbReference type="STRING" id="220668.lp_1053"/>
<dbReference type="EnsemblBacteria" id="CCC78461">
    <property type="protein sequence ID" value="CCC78461"/>
    <property type="gene ID" value="lp_1053"/>
</dbReference>
<dbReference type="GeneID" id="89668564"/>
<dbReference type="KEGG" id="lpl:lp_1053"/>
<dbReference type="PATRIC" id="fig|220668.9.peg.888"/>
<dbReference type="eggNOG" id="COG0098">
    <property type="taxonomic scope" value="Bacteria"/>
</dbReference>
<dbReference type="HOGENOM" id="CLU_065898_2_2_9"/>
<dbReference type="OrthoDB" id="9809045at2"/>
<dbReference type="PhylomeDB" id="Q88XW9"/>
<dbReference type="Proteomes" id="UP000000432">
    <property type="component" value="Chromosome"/>
</dbReference>
<dbReference type="GO" id="GO:0015935">
    <property type="term" value="C:small ribosomal subunit"/>
    <property type="evidence" value="ECO:0007669"/>
    <property type="project" value="InterPro"/>
</dbReference>
<dbReference type="GO" id="GO:0019843">
    <property type="term" value="F:rRNA binding"/>
    <property type="evidence" value="ECO:0007669"/>
    <property type="project" value="UniProtKB-UniRule"/>
</dbReference>
<dbReference type="GO" id="GO:0003735">
    <property type="term" value="F:structural constituent of ribosome"/>
    <property type="evidence" value="ECO:0007669"/>
    <property type="project" value="InterPro"/>
</dbReference>
<dbReference type="GO" id="GO:0006412">
    <property type="term" value="P:translation"/>
    <property type="evidence" value="ECO:0007669"/>
    <property type="project" value="UniProtKB-UniRule"/>
</dbReference>
<dbReference type="FunFam" id="3.30.160.20:FF:000001">
    <property type="entry name" value="30S ribosomal protein S5"/>
    <property type="match status" value="1"/>
</dbReference>
<dbReference type="FunFam" id="3.30.230.10:FF:000002">
    <property type="entry name" value="30S ribosomal protein S5"/>
    <property type="match status" value="1"/>
</dbReference>
<dbReference type="Gene3D" id="3.30.160.20">
    <property type="match status" value="1"/>
</dbReference>
<dbReference type="Gene3D" id="3.30.230.10">
    <property type="match status" value="1"/>
</dbReference>
<dbReference type="HAMAP" id="MF_01307_B">
    <property type="entry name" value="Ribosomal_uS5_B"/>
    <property type="match status" value="1"/>
</dbReference>
<dbReference type="InterPro" id="IPR020568">
    <property type="entry name" value="Ribosomal_Su5_D2-typ_SF"/>
</dbReference>
<dbReference type="InterPro" id="IPR000851">
    <property type="entry name" value="Ribosomal_uS5"/>
</dbReference>
<dbReference type="InterPro" id="IPR005712">
    <property type="entry name" value="Ribosomal_uS5_bac-type"/>
</dbReference>
<dbReference type="InterPro" id="IPR005324">
    <property type="entry name" value="Ribosomal_uS5_C"/>
</dbReference>
<dbReference type="InterPro" id="IPR013810">
    <property type="entry name" value="Ribosomal_uS5_N"/>
</dbReference>
<dbReference type="InterPro" id="IPR018192">
    <property type="entry name" value="Ribosomal_uS5_N_CS"/>
</dbReference>
<dbReference type="InterPro" id="IPR014721">
    <property type="entry name" value="Ribsml_uS5_D2-typ_fold_subgr"/>
</dbReference>
<dbReference type="NCBIfam" id="TIGR01021">
    <property type="entry name" value="rpsE_bact"/>
    <property type="match status" value="1"/>
</dbReference>
<dbReference type="PANTHER" id="PTHR48277">
    <property type="entry name" value="MITOCHONDRIAL RIBOSOMAL PROTEIN S5"/>
    <property type="match status" value="1"/>
</dbReference>
<dbReference type="PANTHER" id="PTHR48277:SF1">
    <property type="entry name" value="MITOCHONDRIAL RIBOSOMAL PROTEIN S5"/>
    <property type="match status" value="1"/>
</dbReference>
<dbReference type="Pfam" id="PF00333">
    <property type="entry name" value="Ribosomal_S5"/>
    <property type="match status" value="1"/>
</dbReference>
<dbReference type="Pfam" id="PF03719">
    <property type="entry name" value="Ribosomal_S5_C"/>
    <property type="match status" value="1"/>
</dbReference>
<dbReference type="SUPFAM" id="SSF54768">
    <property type="entry name" value="dsRNA-binding domain-like"/>
    <property type="match status" value="1"/>
</dbReference>
<dbReference type="SUPFAM" id="SSF54211">
    <property type="entry name" value="Ribosomal protein S5 domain 2-like"/>
    <property type="match status" value="1"/>
</dbReference>
<dbReference type="PROSITE" id="PS00585">
    <property type="entry name" value="RIBOSOMAL_S5"/>
    <property type="match status" value="1"/>
</dbReference>
<dbReference type="PROSITE" id="PS50881">
    <property type="entry name" value="S5_DSRBD"/>
    <property type="match status" value="1"/>
</dbReference>
<reference key="1">
    <citation type="journal article" date="2003" name="Proc. Natl. Acad. Sci. U.S.A.">
        <title>Complete genome sequence of Lactobacillus plantarum WCFS1.</title>
        <authorList>
            <person name="Kleerebezem M."/>
            <person name="Boekhorst J."/>
            <person name="van Kranenburg R."/>
            <person name="Molenaar D."/>
            <person name="Kuipers O.P."/>
            <person name="Leer R."/>
            <person name="Tarchini R."/>
            <person name="Peters S.A."/>
            <person name="Sandbrink H.M."/>
            <person name="Fiers M.W.E.J."/>
            <person name="Stiekema W."/>
            <person name="Klein Lankhorst R.M."/>
            <person name="Bron P.A."/>
            <person name="Hoffer S.M."/>
            <person name="Nierop Groot M.N."/>
            <person name="Kerkhoven R."/>
            <person name="De Vries M."/>
            <person name="Ursing B."/>
            <person name="De Vos W.M."/>
            <person name="Siezen R.J."/>
        </authorList>
    </citation>
    <scope>NUCLEOTIDE SEQUENCE [LARGE SCALE GENOMIC DNA]</scope>
    <source>
        <strain>ATCC BAA-793 / NCIMB 8826 / WCFS1</strain>
    </source>
</reference>
<reference key="2">
    <citation type="journal article" date="2012" name="J. Bacteriol.">
        <title>Complete resequencing and reannotation of the Lactobacillus plantarum WCFS1 genome.</title>
        <authorList>
            <person name="Siezen R.J."/>
            <person name="Francke C."/>
            <person name="Renckens B."/>
            <person name="Boekhorst J."/>
            <person name="Wels M."/>
            <person name="Kleerebezem M."/>
            <person name="van Hijum S.A."/>
        </authorList>
    </citation>
    <scope>NUCLEOTIDE SEQUENCE [LARGE SCALE GENOMIC DNA]</scope>
    <scope>GENOME REANNOTATION</scope>
    <source>
        <strain>ATCC BAA-793 / NCIMB 8826 / WCFS1</strain>
    </source>
</reference>